<reference evidence="6" key="1">
    <citation type="journal article" date="2004" name="Nature">
        <title>Genome sequence of the Brown Norway rat yields insights into mammalian evolution.</title>
        <authorList>
            <person name="Gibbs R.A."/>
            <person name="Weinstock G.M."/>
            <person name="Metzker M.L."/>
            <person name="Muzny D.M."/>
            <person name="Sodergren E.J."/>
            <person name="Scherer S."/>
            <person name="Scott G."/>
            <person name="Steffen D."/>
            <person name="Worley K.C."/>
            <person name="Burch P.E."/>
            <person name="Okwuonu G."/>
            <person name="Hines S."/>
            <person name="Lewis L."/>
            <person name="Deramo C."/>
            <person name="Delgado O."/>
            <person name="Dugan-Rocha S."/>
            <person name="Miner G."/>
            <person name="Morgan M."/>
            <person name="Hawes A."/>
            <person name="Gill R."/>
            <person name="Holt R.A."/>
            <person name="Adams M.D."/>
            <person name="Amanatides P.G."/>
            <person name="Baden-Tillson H."/>
            <person name="Barnstead M."/>
            <person name="Chin S."/>
            <person name="Evans C.A."/>
            <person name="Ferriera S."/>
            <person name="Fosler C."/>
            <person name="Glodek A."/>
            <person name="Gu Z."/>
            <person name="Jennings D."/>
            <person name="Kraft C.L."/>
            <person name="Nguyen T."/>
            <person name="Pfannkoch C.M."/>
            <person name="Sitter C."/>
            <person name="Sutton G.G."/>
            <person name="Venter J.C."/>
            <person name="Woodage T."/>
            <person name="Smith D."/>
            <person name="Lee H.-M."/>
            <person name="Gustafson E."/>
            <person name="Cahill P."/>
            <person name="Kana A."/>
            <person name="Doucette-Stamm L."/>
            <person name="Weinstock K."/>
            <person name="Fechtel K."/>
            <person name="Weiss R.B."/>
            <person name="Dunn D.M."/>
            <person name="Green E.D."/>
            <person name="Blakesley R.W."/>
            <person name="Bouffard G.G."/>
            <person name="De Jong P.J."/>
            <person name="Osoegawa K."/>
            <person name="Zhu B."/>
            <person name="Marra M."/>
            <person name="Schein J."/>
            <person name="Bosdet I."/>
            <person name="Fjell C."/>
            <person name="Jones S."/>
            <person name="Krzywinski M."/>
            <person name="Mathewson C."/>
            <person name="Siddiqui A."/>
            <person name="Wye N."/>
            <person name="McPherson J."/>
            <person name="Zhao S."/>
            <person name="Fraser C.M."/>
            <person name="Shetty J."/>
            <person name="Shatsman S."/>
            <person name="Geer K."/>
            <person name="Chen Y."/>
            <person name="Abramzon S."/>
            <person name="Nierman W.C."/>
            <person name="Havlak P.H."/>
            <person name="Chen R."/>
            <person name="Durbin K.J."/>
            <person name="Egan A."/>
            <person name="Ren Y."/>
            <person name="Song X.-Z."/>
            <person name="Li B."/>
            <person name="Liu Y."/>
            <person name="Qin X."/>
            <person name="Cawley S."/>
            <person name="Cooney A.J."/>
            <person name="D'Souza L.M."/>
            <person name="Martin K."/>
            <person name="Wu J.Q."/>
            <person name="Gonzalez-Garay M.L."/>
            <person name="Jackson A.R."/>
            <person name="Kalafus K.J."/>
            <person name="McLeod M.P."/>
            <person name="Milosavljevic A."/>
            <person name="Virk D."/>
            <person name="Volkov A."/>
            <person name="Wheeler D.A."/>
            <person name="Zhang Z."/>
            <person name="Bailey J.A."/>
            <person name="Eichler E.E."/>
            <person name="Tuzun E."/>
            <person name="Birney E."/>
            <person name="Mongin E."/>
            <person name="Ureta-Vidal A."/>
            <person name="Woodwark C."/>
            <person name="Zdobnov E."/>
            <person name="Bork P."/>
            <person name="Suyama M."/>
            <person name="Torrents D."/>
            <person name="Alexandersson M."/>
            <person name="Trask B.J."/>
            <person name="Young J.M."/>
            <person name="Huang H."/>
            <person name="Wang H."/>
            <person name="Xing H."/>
            <person name="Daniels S."/>
            <person name="Gietzen D."/>
            <person name="Schmidt J."/>
            <person name="Stevens K."/>
            <person name="Vitt U."/>
            <person name="Wingrove J."/>
            <person name="Camara F."/>
            <person name="Mar Alba M."/>
            <person name="Abril J.F."/>
            <person name="Guigo R."/>
            <person name="Smit A."/>
            <person name="Dubchak I."/>
            <person name="Rubin E.M."/>
            <person name="Couronne O."/>
            <person name="Poliakov A."/>
            <person name="Huebner N."/>
            <person name="Ganten D."/>
            <person name="Goesele C."/>
            <person name="Hummel O."/>
            <person name="Kreitler T."/>
            <person name="Lee Y.-A."/>
            <person name="Monti J."/>
            <person name="Schulz H."/>
            <person name="Zimdahl H."/>
            <person name="Himmelbauer H."/>
            <person name="Lehrach H."/>
            <person name="Jacob H.J."/>
            <person name="Bromberg S."/>
            <person name="Gullings-Handley J."/>
            <person name="Jensen-Seaman M.I."/>
            <person name="Kwitek A.E."/>
            <person name="Lazar J."/>
            <person name="Pasko D."/>
            <person name="Tonellato P.J."/>
            <person name="Twigger S."/>
            <person name="Ponting C.P."/>
            <person name="Duarte J.M."/>
            <person name="Rice S."/>
            <person name="Goodstadt L."/>
            <person name="Beatson S.A."/>
            <person name="Emes R.D."/>
            <person name="Winter E.E."/>
            <person name="Webber C."/>
            <person name="Brandt P."/>
            <person name="Nyakatura G."/>
            <person name="Adetobi M."/>
            <person name="Chiaromonte F."/>
            <person name="Elnitski L."/>
            <person name="Eswara P."/>
            <person name="Hardison R.C."/>
            <person name="Hou M."/>
            <person name="Kolbe D."/>
            <person name="Makova K."/>
            <person name="Miller W."/>
            <person name="Nekrutenko A."/>
            <person name="Riemer C."/>
            <person name="Schwartz S."/>
            <person name="Taylor J."/>
            <person name="Yang S."/>
            <person name="Zhang Y."/>
            <person name="Lindpaintner K."/>
            <person name="Andrews T.D."/>
            <person name="Caccamo M."/>
            <person name="Clamp M."/>
            <person name="Clarke L."/>
            <person name="Curwen V."/>
            <person name="Durbin R.M."/>
            <person name="Eyras E."/>
            <person name="Searle S.M."/>
            <person name="Cooper G.M."/>
            <person name="Batzoglou S."/>
            <person name="Brudno M."/>
            <person name="Sidow A."/>
            <person name="Stone E.A."/>
            <person name="Payseur B.A."/>
            <person name="Bourque G."/>
            <person name="Lopez-Otin C."/>
            <person name="Puente X.S."/>
            <person name="Chakrabarti K."/>
            <person name="Chatterji S."/>
            <person name="Dewey C."/>
            <person name="Pachter L."/>
            <person name="Bray N."/>
            <person name="Yap V.B."/>
            <person name="Caspi A."/>
            <person name="Tesler G."/>
            <person name="Pevzner P.A."/>
            <person name="Haussler D."/>
            <person name="Roskin K.M."/>
            <person name="Baertsch R."/>
            <person name="Clawson H."/>
            <person name="Furey T.S."/>
            <person name="Hinrichs A.S."/>
            <person name="Karolchik D."/>
            <person name="Kent W.J."/>
            <person name="Rosenbloom K.R."/>
            <person name="Trumbower H."/>
            <person name="Weirauch M."/>
            <person name="Cooper D.N."/>
            <person name="Stenson P.D."/>
            <person name="Ma B."/>
            <person name="Brent M."/>
            <person name="Arumugam M."/>
            <person name="Shteynberg D."/>
            <person name="Copley R.R."/>
            <person name="Taylor M.S."/>
            <person name="Riethman H."/>
            <person name="Mudunuri U."/>
            <person name="Peterson J."/>
            <person name="Guyer M."/>
            <person name="Felsenfeld A."/>
            <person name="Old S."/>
            <person name="Mockrin S."/>
            <person name="Collins F.S."/>
        </authorList>
    </citation>
    <scope>NUCLEOTIDE SEQUENCE [LARGE SCALE GENOMIC DNA]</scope>
    <source>
        <strain evidence="5">Brown Norway</strain>
    </source>
</reference>
<reference evidence="6 7" key="2">
    <citation type="journal article" date="2004" name="Genome Res.">
        <title>The status, quality, and expansion of the NIH full-length cDNA project: the Mammalian Gene Collection (MGC).</title>
        <authorList>
            <consortium name="The MGC Project Team"/>
        </authorList>
    </citation>
    <scope>NUCLEOTIDE SEQUENCE [LARGE SCALE MRNA] OF 1-359</scope>
    <source>
        <tissue evidence="7">Testis</tissue>
    </source>
</reference>
<organism>
    <name type="scientific">Rattus norvegicus</name>
    <name type="common">Rat</name>
    <dbReference type="NCBI Taxonomy" id="10116"/>
    <lineage>
        <taxon>Eukaryota</taxon>
        <taxon>Metazoa</taxon>
        <taxon>Chordata</taxon>
        <taxon>Craniata</taxon>
        <taxon>Vertebrata</taxon>
        <taxon>Euteleostomi</taxon>
        <taxon>Mammalia</taxon>
        <taxon>Eutheria</taxon>
        <taxon>Euarchontoglires</taxon>
        <taxon>Glires</taxon>
        <taxon>Rodentia</taxon>
        <taxon>Myomorpha</taxon>
        <taxon>Muroidea</taxon>
        <taxon>Muridae</taxon>
        <taxon>Murinae</taxon>
        <taxon>Rattus</taxon>
    </lineage>
</organism>
<evidence type="ECO:0000250" key="1">
    <source>
        <dbReference type="UniProtKB" id="Q8N4N8"/>
    </source>
</evidence>
<evidence type="ECO:0000255" key="2"/>
<evidence type="ECO:0000255" key="3">
    <source>
        <dbReference type="PROSITE-ProRule" id="PRU00283"/>
    </source>
</evidence>
<evidence type="ECO:0000256" key="4">
    <source>
        <dbReference type="SAM" id="MobiDB-lite"/>
    </source>
</evidence>
<evidence type="ECO:0000269" key="5">
    <source>
    </source>
</evidence>
<evidence type="ECO:0000305" key="6"/>
<evidence type="ECO:0000312" key="7">
    <source>
        <dbReference type="EMBL" id="AAH83841.1"/>
    </source>
</evidence>
<evidence type="ECO:0000312" key="8">
    <source>
        <dbReference type="RGD" id="1359248"/>
    </source>
</evidence>
<gene>
    <name evidence="7 8" type="primary">Kif2b</name>
</gene>
<sequence length="664" mass="75004">MASQFCLPLAPRLSPLKPLKSHFTDFQVGICVAIQRSDKRIHLAVVTEINRENSWVTVEWVEKGVKKGKKIELETVLLLNPALASTEHQRSRRPLRPVSVIPATAIGDQRTATKWIAMIPHRNETPSGDSQTLVIPSNPCLMKRKKSPCLREIEKLQKQREKRRRLQLEIRARRALDINTGNPNFETMRMIEEYRRHLDSSKMSRLEPPEDHRICVCVRKRPLNERETTMKDLDIITIPSHNVVMVHESKQKVDLTRYLENQTFCFDHAFDDTASNELVYQFTARPLVESIFRKGMATCFAYGQTGSGKTHTMGGAFSGKAQECSKGIYALVAQDVFLLLRTPAYEKLELKVYGTFFEIYGGKVYDLLNWKKKLQVLEDGNQQIQVVGLQEQEVGCVEEVLNLVELGNSCRTSGQTSVNAHSSRSHAVFQLILKCGGKLHGKFSLVDLAGNERGADTAKATRKRQLEGAEINKSLLALKECIRALGKNKSHTPFRASKLTQVLRDSFIGQNSYTCMIATISPGMTSCENTLNTLRYANRVKELALEARPYPPTDHEMPLTLENGNTNSEKSLQKDDIIQIPTVQKEEEKESDELTSTKEPAASWSRSGPWWEAIQETAEGVNCDVDFCIAQSLSILEQKIGVLTEIQKKLQLLRDDLQKKSQAE</sequence>
<name>KIF2B_RAT</name>
<dbReference type="EMBL" id="AABR03074230">
    <property type="status" value="NOT_ANNOTATED_CDS"/>
    <property type="molecule type" value="Genomic_DNA"/>
</dbReference>
<dbReference type="EMBL" id="BC083841">
    <property type="protein sequence ID" value="AAH83841.1"/>
    <property type="molecule type" value="mRNA"/>
</dbReference>
<dbReference type="RefSeq" id="NP_001005874.2">
    <property type="nucleotide sequence ID" value="NM_001005874.2"/>
</dbReference>
<dbReference type="SMR" id="Q5XI51"/>
<dbReference type="BioGRID" id="252263">
    <property type="interactions" value="1"/>
</dbReference>
<dbReference type="FunCoup" id="Q5XI51">
    <property type="interactions" value="24"/>
</dbReference>
<dbReference type="IntAct" id="Q5XI51">
    <property type="interactions" value="1"/>
</dbReference>
<dbReference type="MINT" id="Q5XI51"/>
<dbReference type="STRING" id="10116.ENSRNOP00000003421"/>
<dbReference type="PhosphoSitePlus" id="Q5XI51"/>
<dbReference type="PaxDb" id="10116-ENSRNOP00000003421"/>
<dbReference type="GeneID" id="287624"/>
<dbReference type="KEGG" id="rno:287624"/>
<dbReference type="AGR" id="RGD:1359248"/>
<dbReference type="CTD" id="84643"/>
<dbReference type="RGD" id="1359248">
    <property type="gene designation" value="Kif2b"/>
</dbReference>
<dbReference type="eggNOG" id="KOG0246">
    <property type="taxonomic scope" value="Eukaryota"/>
</dbReference>
<dbReference type="HOGENOM" id="CLU_001485_19_1_1"/>
<dbReference type="InParanoid" id="Q5XI51"/>
<dbReference type="OrthoDB" id="3176171at2759"/>
<dbReference type="PhylomeDB" id="Q5XI51"/>
<dbReference type="TreeFam" id="TF105222"/>
<dbReference type="Reactome" id="R-RNO-141444">
    <property type="pathway name" value="Amplification of signal from unattached kinetochores via a MAD2 inhibitory signal"/>
</dbReference>
<dbReference type="Reactome" id="R-RNO-2132295">
    <property type="pathway name" value="MHC class II antigen presentation"/>
</dbReference>
<dbReference type="Reactome" id="R-RNO-2467813">
    <property type="pathway name" value="Separation of Sister Chromatids"/>
</dbReference>
<dbReference type="Reactome" id="R-RNO-2500257">
    <property type="pathway name" value="Resolution of Sister Chromatid Cohesion"/>
</dbReference>
<dbReference type="Reactome" id="R-RNO-5663220">
    <property type="pathway name" value="RHO GTPases Activate Formins"/>
</dbReference>
<dbReference type="Reactome" id="R-RNO-6811434">
    <property type="pathway name" value="COPI-dependent Golgi-to-ER retrograde traffic"/>
</dbReference>
<dbReference type="Reactome" id="R-RNO-68877">
    <property type="pathway name" value="Mitotic Prometaphase"/>
</dbReference>
<dbReference type="Reactome" id="R-RNO-9648025">
    <property type="pathway name" value="EML4 and NUDC in mitotic spindle formation"/>
</dbReference>
<dbReference type="Reactome" id="R-RNO-983189">
    <property type="pathway name" value="Kinesins"/>
</dbReference>
<dbReference type="PRO" id="PR:Q5XI51"/>
<dbReference type="Proteomes" id="UP000002494">
    <property type="component" value="Chromosome 10"/>
</dbReference>
<dbReference type="Bgee" id="ENSRNOG00000002535">
    <property type="expression patterns" value="Expressed in testis and 1 other cell type or tissue"/>
</dbReference>
<dbReference type="GO" id="GO:0005813">
    <property type="term" value="C:centrosome"/>
    <property type="evidence" value="ECO:0000318"/>
    <property type="project" value="GO_Central"/>
</dbReference>
<dbReference type="GO" id="GO:0005737">
    <property type="term" value="C:cytoplasm"/>
    <property type="evidence" value="ECO:0000318"/>
    <property type="project" value="GO_Central"/>
</dbReference>
<dbReference type="GO" id="GO:0005871">
    <property type="term" value="C:kinesin complex"/>
    <property type="evidence" value="ECO:0000318"/>
    <property type="project" value="GO_Central"/>
</dbReference>
<dbReference type="GO" id="GO:0000776">
    <property type="term" value="C:kinetochore"/>
    <property type="evidence" value="ECO:0007669"/>
    <property type="project" value="UniProtKB-KW"/>
</dbReference>
<dbReference type="GO" id="GO:0005874">
    <property type="term" value="C:microtubule"/>
    <property type="evidence" value="ECO:0000318"/>
    <property type="project" value="GO_Central"/>
</dbReference>
<dbReference type="GO" id="GO:0005819">
    <property type="term" value="C:spindle"/>
    <property type="evidence" value="ECO:0000318"/>
    <property type="project" value="GO_Central"/>
</dbReference>
<dbReference type="GO" id="GO:0005524">
    <property type="term" value="F:ATP binding"/>
    <property type="evidence" value="ECO:0007669"/>
    <property type="project" value="UniProtKB-KW"/>
</dbReference>
<dbReference type="GO" id="GO:0016887">
    <property type="term" value="F:ATP hydrolysis activity"/>
    <property type="evidence" value="ECO:0000318"/>
    <property type="project" value="GO_Central"/>
</dbReference>
<dbReference type="GO" id="GO:0008017">
    <property type="term" value="F:microtubule binding"/>
    <property type="evidence" value="ECO:0000318"/>
    <property type="project" value="GO_Central"/>
</dbReference>
<dbReference type="GO" id="GO:0003777">
    <property type="term" value="F:microtubule motor activity"/>
    <property type="evidence" value="ECO:0000318"/>
    <property type="project" value="GO_Central"/>
</dbReference>
<dbReference type="GO" id="GO:0051301">
    <property type="term" value="P:cell division"/>
    <property type="evidence" value="ECO:0007669"/>
    <property type="project" value="UniProtKB-KW"/>
</dbReference>
<dbReference type="GO" id="GO:0051310">
    <property type="term" value="P:metaphase chromosome alignment"/>
    <property type="evidence" value="ECO:0000250"/>
    <property type="project" value="UniProtKB"/>
</dbReference>
<dbReference type="GO" id="GO:0007019">
    <property type="term" value="P:microtubule depolymerization"/>
    <property type="evidence" value="ECO:0000250"/>
    <property type="project" value="UniProtKB"/>
</dbReference>
<dbReference type="GO" id="GO:0007018">
    <property type="term" value="P:microtubule-based movement"/>
    <property type="evidence" value="ECO:0000318"/>
    <property type="project" value="GO_Central"/>
</dbReference>
<dbReference type="GO" id="GO:0051983">
    <property type="term" value="P:regulation of chromosome segregation"/>
    <property type="evidence" value="ECO:0000250"/>
    <property type="project" value="UniProtKB"/>
</dbReference>
<dbReference type="CDD" id="cd01367">
    <property type="entry name" value="KISc_KIF2_like"/>
    <property type="match status" value="1"/>
</dbReference>
<dbReference type="FunFam" id="3.40.850.10:FF:000012">
    <property type="entry name" value="Kinesin-like protein"/>
    <property type="match status" value="1"/>
</dbReference>
<dbReference type="Gene3D" id="3.40.850.10">
    <property type="entry name" value="Kinesin motor domain"/>
    <property type="match status" value="1"/>
</dbReference>
<dbReference type="InterPro" id="IPR054473">
    <property type="entry name" value="KIF2A-like_N"/>
</dbReference>
<dbReference type="InterPro" id="IPR027640">
    <property type="entry name" value="Kinesin-like_fam"/>
</dbReference>
<dbReference type="InterPro" id="IPR019821">
    <property type="entry name" value="Kinesin_motor_CS"/>
</dbReference>
<dbReference type="InterPro" id="IPR001752">
    <property type="entry name" value="Kinesin_motor_dom"/>
</dbReference>
<dbReference type="InterPro" id="IPR036961">
    <property type="entry name" value="Kinesin_motor_dom_sf"/>
</dbReference>
<dbReference type="InterPro" id="IPR027417">
    <property type="entry name" value="P-loop_NTPase"/>
</dbReference>
<dbReference type="PANTHER" id="PTHR47971:SF24">
    <property type="entry name" value="KINESIN-LIKE PROTEIN"/>
    <property type="match status" value="1"/>
</dbReference>
<dbReference type="PANTHER" id="PTHR47971">
    <property type="entry name" value="KINESIN-RELATED PROTEIN 6"/>
    <property type="match status" value="1"/>
</dbReference>
<dbReference type="Pfam" id="PF22923">
    <property type="entry name" value="KIF2A-like_1st"/>
    <property type="match status" value="1"/>
</dbReference>
<dbReference type="Pfam" id="PF00225">
    <property type="entry name" value="Kinesin"/>
    <property type="match status" value="1"/>
</dbReference>
<dbReference type="PRINTS" id="PR00380">
    <property type="entry name" value="KINESINHEAVY"/>
</dbReference>
<dbReference type="SMART" id="SM00129">
    <property type="entry name" value="KISc"/>
    <property type="match status" value="1"/>
</dbReference>
<dbReference type="SUPFAM" id="SSF52540">
    <property type="entry name" value="P-loop containing nucleoside triphosphate hydrolases"/>
    <property type="match status" value="1"/>
</dbReference>
<dbReference type="PROSITE" id="PS00411">
    <property type="entry name" value="KINESIN_MOTOR_1"/>
    <property type="match status" value="1"/>
</dbReference>
<dbReference type="PROSITE" id="PS50067">
    <property type="entry name" value="KINESIN_MOTOR_2"/>
    <property type="match status" value="1"/>
</dbReference>
<accession>Q5XI51</accession>
<protein>
    <recommendedName>
        <fullName>Kinesin-like protein KIF2B</fullName>
    </recommendedName>
</protein>
<feature type="chain" id="PRO_0000306276" description="Kinesin-like protein KIF2B">
    <location>
        <begin position="1"/>
        <end position="664"/>
    </location>
</feature>
<feature type="domain" description="Kinesin motor" evidence="3">
    <location>
        <begin position="213"/>
        <end position="543"/>
    </location>
</feature>
<feature type="region of interest" description="Disordered" evidence="4">
    <location>
        <begin position="583"/>
        <end position="607"/>
    </location>
</feature>
<feature type="coiled-coil region" evidence="2">
    <location>
        <begin position="149"/>
        <end position="177"/>
    </location>
</feature>
<feature type="coiled-coil region" evidence="2">
    <location>
        <begin position="642"/>
        <end position="663"/>
    </location>
</feature>
<feature type="binding site" evidence="3">
    <location>
        <begin position="303"/>
        <end position="310"/>
    </location>
    <ligand>
        <name>ATP</name>
        <dbReference type="ChEBI" id="CHEBI:30616"/>
    </ligand>
</feature>
<feature type="modified residue" description="Phosphothreonine; by PLK1" evidence="1">
    <location>
        <position position="125"/>
    </location>
</feature>
<feature type="modified residue" description="Phosphoserine; by PLK1" evidence="1">
    <location>
        <position position="204"/>
    </location>
</feature>
<keyword id="KW-0067">ATP-binding</keyword>
<keyword id="KW-0131">Cell cycle</keyword>
<keyword id="KW-0132">Cell division</keyword>
<keyword id="KW-0137">Centromere</keyword>
<keyword id="KW-0158">Chromosome</keyword>
<keyword id="KW-0175">Coiled coil</keyword>
<keyword id="KW-0963">Cytoplasm</keyword>
<keyword id="KW-0206">Cytoskeleton</keyword>
<keyword id="KW-0995">Kinetochore</keyword>
<keyword id="KW-0493">Microtubule</keyword>
<keyword id="KW-0498">Mitosis</keyword>
<keyword id="KW-0505">Motor protein</keyword>
<keyword id="KW-0547">Nucleotide-binding</keyword>
<keyword id="KW-0597">Phosphoprotein</keyword>
<keyword id="KW-1185">Reference proteome</keyword>
<comment type="function">
    <text evidence="1">Plus end-directed microtubule-dependent motor required for spindle assembly and chromosome movement. Has microtubule depolymerization activity. Plays a role in chromosome congression.</text>
</comment>
<comment type="subcellular location">
    <subcellularLocation>
        <location evidence="1">Cytoplasm</location>
        <location evidence="1">Cytoskeleton</location>
        <location evidence="1">Microtubule organizing center</location>
        <location evidence="1">Centrosome</location>
    </subcellularLocation>
    <subcellularLocation>
        <location evidence="1">Cytoplasm</location>
        <location evidence="1">Cytoskeleton</location>
        <location evidence="1">Spindle</location>
    </subcellularLocation>
    <subcellularLocation>
        <location evidence="1">Chromosome</location>
        <location evidence="1">Centromere</location>
        <location evidence="1">Kinetochore</location>
    </subcellularLocation>
    <text evidence="1">Association with kinetochore is transient.</text>
</comment>
<comment type="PTM">
    <text evidence="1">Phosphorylation at Thr-125 by PLK1 is required for activity in the correction of kinetochore-microtubules attachment errors, while phosphorylation at Ser-204 also by PLK1 is required for the kinetochore localization and activity in prometaphase.</text>
</comment>
<comment type="similarity">
    <text evidence="3">Belongs to the TRAFAC class myosin-kinesin ATPase superfamily. Kinesin family. MCAK/KIF2 subfamily.</text>
</comment>
<proteinExistence type="evidence at transcript level"/>